<sequence>MSQEFLARILEQKAREVEQMKLEQIQPLRQTYRLAEFLKNHQDRLQVIAEVKKASPSLGDINLDVDIVQQAQTYEENGAVMISVLTDEVFFKGHLDYLREISSQVEIPTLNKDFIIDEKQIIRARNAGATVILLIVAALSEERLKELYDYATELGLEVLVETHNLAELEVAHRLGAEIIGVNNRNLTTFEVDLQTSVDLAPYFEEGRYYISESAIFTGQDAERLAPYFNGILVGTALMQAENVAQRIKELQIDKG</sequence>
<evidence type="ECO:0000255" key="1">
    <source>
        <dbReference type="HAMAP-Rule" id="MF_00134"/>
    </source>
</evidence>
<feature type="chain" id="PRO_0000154262" description="Indole-3-glycerol phosphate synthase">
    <location>
        <begin position="1"/>
        <end position="255"/>
    </location>
</feature>
<accession>Q97P30</accession>
<comment type="catalytic activity">
    <reaction evidence="1">
        <text>1-(2-carboxyphenylamino)-1-deoxy-D-ribulose 5-phosphate + H(+) = (1S,2R)-1-C-(indol-3-yl)glycerol 3-phosphate + CO2 + H2O</text>
        <dbReference type="Rhea" id="RHEA:23476"/>
        <dbReference type="ChEBI" id="CHEBI:15377"/>
        <dbReference type="ChEBI" id="CHEBI:15378"/>
        <dbReference type="ChEBI" id="CHEBI:16526"/>
        <dbReference type="ChEBI" id="CHEBI:58613"/>
        <dbReference type="ChEBI" id="CHEBI:58866"/>
        <dbReference type="EC" id="4.1.1.48"/>
    </reaction>
</comment>
<comment type="pathway">
    <text evidence="1">Amino-acid biosynthesis; L-tryptophan biosynthesis; L-tryptophan from chorismate: step 4/5.</text>
</comment>
<comment type="similarity">
    <text evidence="1">Belongs to the TrpC family.</text>
</comment>
<dbReference type="EC" id="4.1.1.48" evidence="1"/>
<dbReference type="EMBL" id="AE005672">
    <property type="protein sequence ID" value="AAK75887.1"/>
    <property type="molecule type" value="Genomic_DNA"/>
</dbReference>
<dbReference type="PIR" id="F95211">
    <property type="entry name" value="F95211"/>
</dbReference>
<dbReference type="RefSeq" id="WP_000076548.1">
    <property type="nucleotide sequence ID" value="NZ_CP155539.1"/>
</dbReference>
<dbReference type="SMR" id="Q97P30"/>
<dbReference type="PaxDb" id="170187-SP_1814"/>
<dbReference type="EnsemblBacteria" id="AAK75887">
    <property type="protein sequence ID" value="AAK75887"/>
    <property type="gene ID" value="SP_1814"/>
</dbReference>
<dbReference type="KEGG" id="spn:SP_1814"/>
<dbReference type="eggNOG" id="COG0134">
    <property type="taxonomic scope" value="Bacteria"/>
</dbReference>
<dbReference type="PhylomeDB" id="Q97P30"/>
<dbReference type="BioCyc" id="SPNE170187:G1FZB-1846-MONOMER"/>
<dbReference type="UniPathway" id="UPA00035">
    <property type="reaction ID" value="UER00043"/>
</dbReference>
<dbReference type="Proteomes" id="UP000000585">
    <property type="component" value="Chromosome"/>
</dbReference>
<dbReference type="GO" id="GO:0004425">
    <property type="term" value="F:indole-3-glycerol-phosphate synthase activity"/>
    <property type="evidence" value="ECO:0007669"/>
    <property type="project" value="UniProtKB-UniRule"/>
</dbReference>
<dbReference type="GO" id="GO:0004640">
    <property type="term" value="F:phosphoribosylanthranilate isomerase activity"/>
    <property type="evidence" value="ECO:0007669"/>
    <property type="project" value="TreeGrafter"/>
</dbReference>
<dbReference type="GO" id="GO:0000162">
    <property type="term" value="P:L-tryptophan biosynthetic process"/>
    <property type="evidence" value="ECO:0007669"/>
    <property type="project" value="UniProtKB-UniRule"/>
</dbReference>
<dbReference type="CDD" id="cd00331">
    <property type="entry name" value="IGPS"/>
    <property type="match status" value="1"/>
</dbReference>
<dbReference type="FunFam" id="3.20.20.70:FF:000024">
    <property type="entry name" value="Indole-3-glycerol phosphate synthase"/>
    <property type="match status" value="1"/>
</dbReference>
<dbReference type="Gene3D" id="3.20.20.70">
    <property type="entry name" value="Aldolase class I"/>
    <property type="match status" value="1"/>
</dbReference>
<dbReference type="HAMAP" id="MF_00134_B">
    <property type="entry name" value="IGPS_B"/>
    <property type="match status" value="1"/>
</dbReference>
<dbReference type="InterPro" id="IPR013785">
    <property type="entry name" value="Aldolase_TIM"/>
</dbReference>
<dbReference type="InterPro" id="IPR045186">
    <property type="entry name" value="Indole-3-glycerol_P_synth"/>
</dbReference>
<dbReference type="InterPro" id="IPR013798">
    <property type="entry name" value="Indole-3-glycerol_P_synth_dom"/>
</dbReference>
<dbReference type="InterPro" id="IPR001468">
    <property type="entry name" value="Indole-3-GlycerolPSynthase_CS"/>
</dbReference>
<dbReference type="InterPro" id="IPR011060">
    <property type="entry name" value="RibuloseP-bd_barrel"/>
</dbReference>
<dbReference type="NCBIfam" id="NF001371">
    <property type="entry name" value="PRK00278.1-3"/>
    <property type="match status" value="1"/>
</dbReference>
<dbReference type="NCBIfam" id="NF001377">
    <property type="entry name" value="PRK00278.2-4"/>
    <property type="match status" value="1"/>
</dbReference>
<dbReference type="PANTHER" id="PTHR22854:SF2">
    <property type="entry name" value="INDOLE-3-GLYCEROL-PHOSPHATE SYNTHASE"/>
    <property type="match status" value="1"/>
</dbReference>
<dbReference type="PANTHER" id="PTHR22854">
    <property type="entry name" value="TRYPTOPHAN BIOSYNTHESIS PROTEIN"/>
    <property type="match status" value="1"/>
</dbReference>
<dbReference type="Pfam" id="PF00218">
    <property type="entry name" value="IGPS"/>
    <property type="match status" value="1"/>
</dbReference>
<dbReference type="SUPFAM" id="SSF51366">
    <property type="entry name" value="Ribulose-phoshate binding barrel"/>
    <property type="match status" value="1"/>
</dbReference>
<dbReference type="PROSITE" id="PS00614">
    <property type="entry name" value="IGPS"/>
    <property type="match status" value="1"/>
</dbReference>
<name>TRPC_STRPN</name>
<protein>
    <recommendedName>
        <fullName evidence="1">Indole-3-glycerol phosphate synthase</fullName>
        <shortName evidence="1">IGPS</shortName>
        <ecNumber evidence="1">4.1.1.48</ecNumber>
    </recommendedName>
</protein>
<organism>
    <name type="scientific">Streptococcus pneumoniae serotype 4 (strain ATCC BAA-334 / TIGR4)</name>
    <dbReference type="NCBI Taxonomy" id="170187"/>
    <lineage>
        <taxon>Bacteria</taxon>
        <taxon>Bacillati</taxon>
        <taxon>Bacillota</taxon>
        <taxon>Bacilli</taxon>
        <taxon>Lactobacillales</taxon>
        <taxon>Streptococcaceae</taxon>
        <taxon>Streptococcus</taxon>
    </lineage>
</organism>
<reference key="1">
    <citation type="journal article" date="2001" name="Science">
        <title>Complete genome sequence of a virulent isolate of Streptococcus pneumoniae.</title>
        <authorList>
            <person name="Tettelin H."/>
            <person name="Nelson K.E."/>
            <person name="Paulsen I.T."/>
            <person name="Eisen J.A."/>
            <person name="Read T.D."/>
            <person name="Peterson S.N."/>
            <person name="Heidelberg J.F."/>
            <person name="DeBoy R.T."/>
            <person name="Haft D.H."/>
            <person name="Dodson R.J."/>
            <person name="Durkin A.S."/>
            <person name="Gwinn M.L."/>
            <person name="Kolonay J.F."/>
            <person name="Nelson W.C."/>
            <person name="Peterson J.D."/>
            <person name="Umayam L.A."/>
            <person name="White O."/>
            <person name="Salzberg S.L."/>
            <person name="Lewis M.R."/>
            <person name="Radune D."/>
            <person name="Holtzapple E.K."/>
            <person name="Khouri H.M."/>
            <person name="Wolf A.M."/>
            <person name="Utterback T.R."/>
            <person name="Hansen C.L."/>
            <person name="McDonald L.A."/>
            <person name="Feldblyum T.V."/>
            <person name="Angiuoli S.V."/>
            <person name="Dickinson T."/>
            <person name="Hickey E.K."/>
            <person name="Holt I.E."/>
            <person name="Loftus B.J."/>
            <person name="Yang F."/>
            <person name="Smith H.O."/>
            <person name="Venter J.C."/>
            <person name="Dougherty B.A."/>
            <person name="Morrison D.A."/>
            <person name="Hollingshead S.K."/>
            <person name="Fraser C.M."/>
        </authorList>
    </citation>
    <scope>NUCLEOTIDE SEQUENCE [LARGE SCALE GENOMIC DNA]</scope>
    <source>
        <strain>ATCC BAA-334 / TIGR4</strain>
    </source>
</reference>
<keyword id="KW-0028">Amino-acid biosynthesis</keyword>
<keyword id="KW-0057">Aromatic amino acid biosynthesis</keyword>
<keyword id="KW-0210">Decarboxylase</keyword>
<keyword id="KW-0456">Lyase</keyword>
<keyword id="KW-1185">Reference proteome</keyword>
<keyword id="KW-0822">Tryptophan biosynthesis</keyword>
<gene>
    <name evidence="1" type="primary">trpC</name>
    <name type="ordered locus">SP_1814</name>
</gene>
<proteinExistence type="inferred from homology"/>